<protein>
    <recommendedName>
        <fullName>Arylsulfatase</fullName>
        <shortName>AS</shortName>
        <ecNumber>3.1.6.1</ecNumber>
    </recommendedName>
    <alternativeName>
        <fullName>Aryl-sulfate sulphohydrolase</fullName>
    </alternativeName>
</protein>
<reference key="1">
    <citation type="journal article" date="1989" name="Mol. Gen. Genet.">
        <title>Structure and expression of the gene encoding the periplasmic arylsulfatase of Chlamydomonas reinhardtii.</title>
        <authorList>
            <person name="de Hostos E.L."/>
            <person name="Schilling J."/>
            <person name="Grossman A.R."/>
        </authorList>
    </citation>
    <scope>NUCLEOTIDE SEQUENCE [GENOMIC DNA / MRNA]</scope>
    <scope>PROTEIN SEQUENCE OF 22-55</scope>
    <source>
        <strain>cw15</strain>
    </source>
</reference>
<comment type="catalytic activity">
    <reaction>
        <text>an aryl sulfate + H2O = a phenol + sulfate + H(+)</text>
        <dbReference type="Rhea" id="RHEA:17261"/>
        <dbReference type="ChEBI" id="CHEBI:15377"/>
        <dbReference type="ChEBI" id="CHEBI:15378"/>
        <dbReference type="ChEBI" id="CHEBI:16189"/>
        <dbReference type="ChEBI" id="CHEBI:33853"/>
        <dbReference type="ChEBI" id="CHEBI:140317"/>
        <dbReference type="EC" id="3.1.6.1"/>
    </reaction>
</comment>
<comment type="cofactor">
    <cofactor evidence="1">
        <name>Ca(2+)</name>
        <dbReference type="ChEBI" id="CHEBI:29108"/>
    </cofactor>
    <text evidence="1">Binds 1 Ca(2+) ion per subunit.</text>
</comment>
<comment type="subcellular location">
    <subcellularLocation>
        <location>Periplasm</location>
    </subcellularLocation>
</comment>
<comment type="induction">
    <text>By sulfur deprivation.</text>
</comment>
<comment type="PTM">
    <text evidence="1">The conversion to 3-oxoalanine (also known as C-formylglycine, FGly), of a serine or cysteine residue in prokaryotes and of a cysteine residue in eukaryotes, is critical for catalytic activity.</text>
</comment>
<comment type="similarity">
    <text evidence="5">Belongs to the sulfatase family.</text>
</comment>
<comment type="sequence caution" evidence="5">
    <conflict type="frameshift">
        <sequence resource="EMBL-CDS" id="CAA34302"/>
    </conflict>
</comment>
<comment type="sequence caution" evidence="5">
    <conflict type="frameshift">
        <sequence resource="EMBL-CDS" id="CAA36545"/>
    </conflict>
</comment>
<keyword id="KW-0106">Calcium</keyword>
<keyword id="KW-0903">Direct protein sequencing</keyword>
<keyword id="KW-0325">Glycoprotein</keyword>
<keyword id="KW-0378">Hydrolase</keyword>
<keyword id="KW-0479">Metal-binding</keyword>
<keyword id="KW-0574">Periplasm</keyword>
<keyword id="KW-0732">Signal</keyword>
<keyword id="KW-0346">Stress response</keyword>
<gene>
    <name type="primary">AS</name>
</gene>
<name>ARS_CHLRE</name>
<accession>P14217</accession>
<dbReference type="EC" id="3.1.6.1"/>
<dbReference type="EMBL" id="X16180">
    <property type="protein sequence ID" value="CAA34302.1"/>
    <property type="status" value="ALT_FRAME"/>
    <property type="molecule type" value="mRNA"/>
</dbReference>
<dbReference type="EMBL" id="X52304">
    <property type="protein sequence ID" value="CAA36545.1"/>
    <property type="status" value="ALT_FRAME"/>
    <property type="molecule type" value="mRNA"/>
</dbReference>
<dbReference type="EMBL" id="X16179">
    <property type="protein sequence ID" value="CAA34301.1"/>
    <property type="molecule type" value="Genomic_DNA"/>
</dbReference>
<dbReference type="PIR" id="JQ0310">
    <property type="entry name" value="KJKM"/>
</dbReference>
<dbReference type="GlyCosmos" id="P14217">
    <property type="glycosylation" value="5 sites, No reported glycans"/>
</dbReference>
<dbReference type="PaxDb" id="3055-EDP04462"/>
<dbReference type="eggNOG" id="KOG3731">
    <property type="taxonomic scope" value="Eukaryota"/>
</dbReference>
<dbReference type="GO" id="GO:0004065">
    <property type="term" value="F:arylsulfatase activity"/>
    <property type="evidence" value="ECO:0007669"/>
    <property type="project" value="UniProtKB-EC"/>
</dbReference>
<dbReference type="GO" id="GO:0046872">
    <property type="term" value="F:metal ion binding"/>
    <property type="evidence" value="ECO:0007669"/>
    <property type="project" value="UniProtKB-KW"/>
</dbReference>
<dbReference type="GO" id="GO:0018958">
    <property type="term" value="P:phenol-containing compound metabolic process"/>
    <property type="evidence" value="ECO:0007669"/>
    <property type="project" value="InterPro"/>
</dbReference>
<dbReference type="CDD" id="cd16147">
    <property type="entry name" value="G6S"/>
    <property type="match status" value="1"/>
</dbReference>
<dbReference type="FunFam" id="3.40.720.10:FF:000098">
    <property type="entry name" value="Arylsulfatase"/>
    <property type="match status" value="1"/>
</dbReference>
<dbReference type="Gene3D" id="3.40.720.10">
    <property type="entry name" value="Alkaline Phosphatase, subunit A"/>
    <property type="match status" value="1"/>
</dbReference>
<dbReference type="InterPro" id="IPR017850">
    <property type="entry name" value="Alkaline_phosphatase_core_sf"/>
</dbReference>
<dbReference type="InterPro" id="IPR012083">
    <property type="entry name" value="Arylsulfatase"/>
</dbReference>
<dbReference type="InterPro" id="IPR024607">
    <property type="entry name" value="Sulfatase_CS"/>
</dbReference>
<dbReference type="InterPro" id="IPR000917">
    <property type="entry name" value="Sulfatase_N"/>
</dbReference>
<dbReference type="PANTHER" id="PTHR43108">
    <property type="entry name" value="N-ACETYLGLUCOSAMINE-6-SULFATASE FAMILY MEMBER"/>
    <property type="match status" value="1"/>
</dbReference>
<dbReference type="PANTHER" id="PTHR43108:SF8">
    <property type="entry name" value="SD21168P"/>
    <property type="match status" value="1"/>
</dbReference>
<dbReference type="Pfam" id="PF00884">
    <property type="entry name" value="Sulfatase"/>
    <property type="match status" value="1"/>
</dbReference>
<dbReference type="PIRSF" id="PIRSF000972">
    <property type="entry name" value="Arylsulf_plant"/>
    <property type="match status" value="1"/>
</dbReference>
<dbReference type="SUPFAM" id="SSF53649">
    <property type="entry name" value="Alkaline phosphatase-like"/>
    <property type="match status" value="1"/>
</dbReference>
<dbReference type="PROSITE" id="PS00523">
    <property type="entry name" value="SULFATASE_1"/>
    <property type="match status" value="1"/>
</dbReference>
<dbReference type="PROSITE" id="PS00149">
    <property type="entry name" value="SULFATASE_2"/>
    <property type="match status" value="1"/>
</dbReference>
<sequence length="647" mass="72106">MGALAVFAVACLAAVASVAHAADTKKPNFVVIFTDDQDAIQNSTHPHYMPSLHKYIRYPGVELSQYFVTTPVCCPSRTNLXRGQFAHNTNFTSVLPPYGGWAKWKGLGIDQSYLPLWLKDQGYNTYYVGKFLVDYSVSNYQQVPRAGTISMPXVTPYTFDYNTRLQRNGATPNIYPGEYSTDVIRDKGVAQIKSAVAAGKPFYAQISPIAPHTSTQISTNPATGVTRSYFFPPIPAPPHWQLFSDANLPGGSXNKNLYEVDVSDKPAWIRALPLAQQNNRTYQEEIYRLRLRSLGPDELIEQVVKTLDEAGVLDNTYIIYSADNGYHVGAHRFGAGKTTGYEEDLRVPFLIRGPGIKASKSDKPQNSKVGLHVDFAPTILSLAGASHLLGDKGLDGTPLGLYANDDGTLPSDYPRPEQHRQQFQGEFWGGWSDELLQNLRSQPNNTWKVVRTYDESSKQGWKLIAQCTNERELYDLRKDPGELYNIYDKAKPAVRSRLEGLLAVLAVCKGESCSNPWKILHPDGTVKNFTQALNSKYDRIYNAIRPFTYKRCLPYLDWDNEDSQFKTQIRGANPAAGVGHHRLLTAASERAIATRRRAQAAVSAELADGPAVFQAKVEEKSVPVPQDILKADVEKWFAFNNAEYYLA</sequence>
<feature type="signal peptide" evidence="4">
    <location>
        <begin position="1"/>
        <end position="21"/>
    </location>
</feature>
<feature type="chain" id="PRO_0000033444" description="Arylsulfatase">
    <location>
        <begin position="22"/>
        <end position="647"/>
    </location>
</feature>
<feature type="active site" description="Nucleophile" evidence="2">
    <location>
        <position position="73"/>
    </location>
</feature>
<feature type="binding site" evidence="1">
    <location>
        <position position="35"/>
    </location>
    <ligand>
        <name>Ca(2+)</name>
        <dbReference type="ChEBI" id="CHEBI:29108"/>
    </ligand>
</feature>
<feature type="binding site" evidence="1">
    <location>
        <position position="36"/>
    </location>
    <ligand>
        <name>Ca(2+)</name>
        <dbReference type="ChEBI" id="CHEBI:29108"/>
    </ligand>
</feature>
<feature type="binding site" description="via 3-oxoalanine" evidence="1">
    <location>
        <position position="73"/>
    </location>
    <ligand>
        <name>Ca(2+)</name>
        <dbReference type="ChEBI" id="CHEBI:29108"/>
    </ligand>
</feature>
<feature type="binding site" evidence="1">
    <location>
        <position position="323"/>
    </location>
    <ligand>
        <name>Ca(2+)</name>
        <dbReference type="ChEBI" id="CHEBI:29108"/>
    </ligand>
</feature>
<feature type="binding site" evidence="1">
    <location>
        <position position="324"/>
    </location>
    <ligand>
        <name>Ca(2+)</name>
        <dbReference type="ChEBI" id="CHEBI:29108"/>
    </ligand>
</feature>
<feature type="modified residue" description="3-oxoalanine (Cys)" evidence="2">
    <location>
        <position position="73"/>
    </location>
</feature>
<feature type="glycosylation site" description="N-linked (GlcNAc...) asparagine" evidence="3">
    <location>
        <position position="42"/>
    </location>
</feature>
<feature type="glycosylation site" description="N-linked (GlcNAc...) asparagine" evidence="3">
    <location>
        <position position="90"/>
    </location>
</feature>
<feature type="glycosylation site" description="N-linked (GlcNAc...) asparagine" evidence="3">
    <location>
        <position position="279"/>
    </location>
</feature>
<feature type="glycosylation site" description="N-linked (GlcNAc...) asparagine" evidence="3">
    <location>
        <position position="444"/>
    </location>
</feature>
<feature type="glycosylation site" description="N-linked (GlcNAc...) asparagine" evidence="3">
    <location>
        <position position="528"/>
    </location>
</feature>
<evidence type="ECO:0000250" key="1"/>
<evidence type="ECO:0000250" key="2">
    <source>
        <dbReference type="UniProtKB" id="P15289"/>
    </source>
</evidence>
<evidence type="ECO:0000255" key="3"/>
<evidence type="ECO:0000269" key="4">
    <source>
    </source>
</evidence>
<evidence type="ECO:0000305" key="5"/>
<organism>
    <name type="scientific">Chlamydomonas reinhardtii</name>
    <name type="common">Chlamydomonas smithii</name>
    <dbReference type="NCBI Taxonomy" id="3055"/>
    <lineage>
        <taxon>Eukaryota</taxon>
        <taxon>Viridiplantae</taxon>
        <taxon>Chlorophyta</taxon>
        <taxon>core chlorophytes</taxon>
        <taxon>Chlorophyceae</taxon>
        <taxon>CS clade</taxon>
        <taxon>Chlamydomonadales</taxon>
        <taxon>Chlamydomonadaceae</taxon>
        <taxon>Chlamydomonas</taxon>
    </lineage>
</organism>
<proteinExistence type="evidence at protein level"/>